<keyword id="KW-0320">Glycogen biosynthesis</keyword>
<keyword id="KW-1185">Reference proteome</keyword>
<gene>
    <name type="primary">glgD</name>
    <name type="ordered locus">BSU30960</name>
</gene>
<dbReference type="EMBL" id="Z25795">
    <property type="protein sequence ID" value="CAA81042.1"/>
    <property type="molecule type" value="Genomic_DNA"/>
</dbReference>
<dbReference type="EMBL" id="AF008220">
    <property type="protein sequence ID" value="AAC00216.1"/>
    <property type="molecule type" value="Genomic_DNA"/>
</dbReference>
<dbReference type="EMBL" id="AL009126">
    <property type="protein sequence ID" value="CAB15074.1"/>
    <property type="molecule type" value="Genomic_DNA"/>
</dbReference>
<dbReference type="PIR" id="S40050">
    <property type="entry name" value="S40050"/>
</dbReference>
<dbReference type="RefSeq" id="NP_390974.1">
    <property type="nucleotide sequence ID" value="NC_000964.3"/>
</dbReference>
<dbReference type="RefSeq" id="WP_004398841.1">
    <property type="nucleotide sequence ID" value="NZ_OZ025638.1"/>
</dbReference>
<dbReference type="SMR" id="P39124"/>
<dbReference type="FunCoup" id="P39124">
    <property type="interactions" value="89"/>
</dbReference>
<dbReference type="STRING" id="224308.BSU30960"/>
<dbReference type="PaxDb" id="224308-BSU30960"/>
<dbReference type="EnsemblBacteria" id="CAB15074">
    <property type="protein sequence ID" value="CAB15074"/>
    <property type="gene ID" value="BSU_30960"/>
</dbReference>
<dbReference type="GeneID" id="936778"/>
<dbReference type="KEGG" id="bsu:BSU30960"/>
<dbReference type="PATRIC" id="fig|224308.43.peg.3237"/>
<dbReference type="eggNOG" id="COG0448">
    <property type="taxonomic scope" value="Bacteria"/>
</dbReference>
<dbReference type="InParanoid" id="P39124"/>
<dbReference type="OrthoDB" id="9801810at2"/>
<dbReference type="PhylomeDB" id="P39124"/>
<dbReference type="BioCyc" id="BSUB:BSU30960-MONOMER"/>
<dbReference type="Proteomes" id="UP000001570">
    <property type="component" value="Chromosome"/>
</dbReference>
<dbReference type="GO" id="GO:0008878">
    <property type="term" value="F:glucose-1-phosphate adenylyltransferase activity"/>
    <property type="evidence" value="ECO:0007669"/>
    <property type="project" value="InterPro"/>
</dbReference>
<dbReference type="GO" id="GO:0005978">
    <property type="term" value="P:glycogen biosynthetic process"/>
    <property type="evidence" value="ECO:0007669"/>
    <property type="project" value="UniProtKB-KW"/>
</dbReference>
<dbReference type="CDD" id="cd02508">
    <property type="entry name" value="ADP_Glucose_PP"/>
    <property type="match status" value="1"/>
</dbReference>
<dbReference type="CDD" id="cd04651">
    <property type="entry name" value="LbH_G1P_AT_C"/>
    <property type="match status" value="1"/>
</dbReference>
<dbReference type="Gene3D" id="2.160.10.10">
    <property type="entry name" value="Hexapeptide repeat proteins"/>
    <property type="match status" value="1"/>
</dbReference>
<dbReference type="Gene3D" id="3.90.550.10">
    <property type="entry name" value="Spore Coat Polysaccharide Biosynthesis Protein SpsA, Chain A"/>
    <property type="match status" value="1"/>
</dbReference>
<dbReference type="InterPro" id="IPR011831">
    <property type="entry name" value="ADP-Glc_PPase"/>
</dbReference>
<dbReference type="InterPro" id="IPR011832">
    <property type="entry name" value="GlgDAde_trans"/>
</dbReference>
<dbReference type="InterPro" id="IPR056818">
    <property type="entry name" value="GlmU/GlgC-like_hexapep"/>
</dbReference>
<dbReference type="InterPro" id="IPR005835">
    <property type="entry name" value="NTP_transferase_dom"/>
</dbReference>
<dbReference type="InterPro" id="IPR029044">
    <property type="entry name" value="Nucleotide-diphossugar_trans"/>
</dbReference>
<dbReference type="InterPro" id="IPR011004">
    <property type="entry name" value="Trimer_LpxA-like_sf"/>
</dbReference>
<dbReference type="NCBIfam" id="TIGR02092">
    <property type="entry name" value="glgD"/>
    <property type="match status" value="1"/>
</dbReference>
<dbReference type="PANTHER" id="PTHR43523">
    <property type="entry name" value="GLUCOSE-1-PHOSPHATE ADENYLYLTRANSFERASE-RELATED"/>
    <property type="match status" value="1"/>
</dbReference>
<dbReference type="PANTHER" id="PTHR43523:SF6">
    <property type="entry name" value="GLYCOGEN BIOSYNTHESIS PROTEIN GLGD"/>
    <property type="match status" value="1"/>
</dbReference>
<dbReference type="Pfam" id="PF24894">
    <property type="entry name" value="Hexapep_GlmU"/>
    <property type="match status" value="1"/>
</dbReference>
<dbReference type="Pfam" id="PF00483">
    <property type="entry name" value="NTP_transferase"/>
    <property type="match status" value="1"/>
</dbReference>
<dbReference type="SUPFAM" id="SSF53448">
    <property type="entry name" value="Nucleotide-diphospho-sugar transferases"/>
    <property type="match status" value="1"/>
</dbReference>
<dbReference type="SUPFAM" id="SSF51161">
    <property type="entry name" value="Trimeric LpxA-like enzymes"/>
    <property type="match status" value="1"/>
</dbReference>
<organism>
    <name type="scientific">Bacillus subtilis (strain 168)</name>
    <dbReference type="NCBI Taxonomy" id="224308"/>
    <lineage>
        <taxon>Bacteria</taxon>
        <taxon>Bacillati</taxon>
        <taxon>Bacillota</taxon>
        <taxon>Bacilli</taxon>
        <taxon>Bacillales</taxon>
        <taxon>Bacillaceae</taxon>
        <taxon>Bacillus</taxon>
    </lineage>
</organism>
<proteinExistence type="evidence at transcript level"/>
<accession>P39124</accession>
<protein>
    <recommendedName>
        <fullName>Glycogen biosynthesis protein GlgD</fullName>
    </recommendedName>
</protein>
<feature type="chain" id="PRO_0000195361" description="Glycogen biosynthesis protein GlgD">
    <location>
        <begin position="1"/>
        <end position="343"/>
    </location>
</feature>
<comment type="function">
    <text>Required for the synthesis of glycogen.</text>
</comment>
<comment type="induction">
    <text>Expressed exclusively on media containing carbon sources that allow efficient sporulation.</text>
</comment>
<comment type="similarity">
    <text evidence="1">Belongs to the bacterial/plant glucose-1-phosphate adenylyltransferase family.</text>
</comment>
<evidence type="ECO:0000305" key="1"/>
<name>GLGD_BACSU</name>
<reference key="1">
    <citation type="journal article" date="1994" name="Mol. Microbiol.">
        <title>Glycogen in Bacillus subtilis: molecular characterization of an operon encoding enzymes involved in glycogen biosynthesis and degradation.</title>
        <authorList>
            <person name="Kiel J.A.K.W."/>
            <person name="Boels J.M."/>
            <person name="Beldman G."/>
            <person name="Venema G."/>
        </authorList>
    </citation>
    <scope>NUCLEOTIDE SEQUENCE [GENOMIC DNA]</scope>
    <source>
        <strain>168</strain>
    </source>
</reference>
<reference key="2">
    <citation type="journal article" date="1997" name="Microbiology">
        <title>Sequencing and functional annotation of the Bacillus subtilis genes in the 200 kb rrnB-dnaB region.</title>
        <authorList>
            <person name="Lapidus A."/>
            <person name="Galleron N."/>
            <person name="Sorokin A."/>
            <person name="Ehrlich S.D."/>
        </authorList>
    </citation>
    <scope>NUCLEOTIDE SEQUENCE [GENOMIC DNA]</scope>
    <source>
        <strain>168</strain>
    </source>
</reference>
<reference key="3">
    <citation type="journal article" date="1997" name="Nature">
        <title>The complete genome sequence of the Gram-positive bacterium Bacillus subtilis.</title>
        <authorList>
            <person name="Kunst F."/>
            <person name="Ogasawara N."/>
            <person name="Moszer I."/>
            <person name="Albertini A.M."/>
            <person name="Alloni G."/>
            <person name="Azevedo V."/>
            <person name="Bertero M.G."/>
            <person name="Bessieres P."/>
            <person name="Bolotin A."/>
            <person name="Borchert S."/>
            <person name="Borriss R."/>
            <person name="Boursier L."/>
            <person name="Brans A."/>
            <person name="Braun M."/>
            <person name="Brignell S.C."/>
            <person name="Bron S."/>
            <person name="Brouillet S."/>
            <person name="Bruschi C.V."/>
            <person name="Caldwell B."/>
            <person name="Capuano V."/>
            <person name="Carter N.M."/>
            <person name="Choi S.-K."/>
            <person name="Codani J.-J."/>
            <person name="Connerton I.F."/>
            <person name="Cummings N.J."/>
            <person name="Daniel R.A."/>
            <person name="Denizot F."/>
            <person name="Devine K.M."/>
            <person name="Duesterhoeft A."/>
            <person name="Ehrlich S.D."/>
            <person name="Emmerson P.T."/>
            <person name="Entian K.-D."/>
            <person name="Errington J."/>
            <person name="Fabret C."/>
            <person name="Ferrari E."/>
            <person name="Foulger D."/>
            <person name="Fritz C."/>
            <person name="Fujita M."/>
            <person name="Fujita Y."/>
            <person name="Fuma S."/>
            <person name="Galizzi A."/>
            <person name="Galleron N."/>
            <person name="Ghim S.-Y."/>
            <person name="Glaser P."/>
            <person name="Goffeau A."/>
            <person name="Golightly E.J."/>
            <person name="Grandi G."/>
            <person name="Guiseppi G."/>
            <person name="Guy B.J."/>
            <person name="Haga K."/>
            <person name="Haiech J."/>
            <person name="Harwood C.R."/>
            <person name="Henaut A."/>
            <person name="Hilbert H."/>
            <person name="Holsappel S."/>
            <person name="Hosono S."/>
            <person name="Hullo M.-F."/>
            <person name="Itaya M."/>
            <person name="Jones L.-M."/>
            <person name="Joris B."/>
            <person name="Karamata D."/>
            <person name="Kasahara Y."/>
            <person name="Klaerr-Blanchard M."/>
            <person name="Klein C."/>
            <person name="Kobayashi Y."/>
            <person name="Koetter P."/>
            <person name="Koningstein G."/>
            <person name="Krogh S."/>
            <person name="Kumano M."/>
            <person name="Kurita K."/>
            <person name="Lapidus A."/>
            <person name="Lardinois S."/>
            <person name="Lauber J."/>
            <person name="Lazarevic V."/>
            <person name="Lee S.-M."/>
            <person name="Levine A."/>
            <person name="Liu H."/>
            <person name="Masuda S."/>
            <person name="Mauel C."/>
            <person name="Medigue C."/>
            <person name="Medina N."/>
            <person name="Mellado R.P."/>
            <person name="Mizuno M."/>
            <person name="Moestl D."/>
            <person name="Nakai S."/>
            <person name="Noback M."/>
            <person name="Noone D."/>
            <person name="O'Reilly M."/>
            <person name="Ogawa K."/>
            <person name="Ogiwara A."/>
            <person name="Oudega B."/>
            <person name="Park S.-H."/>
            <person name="Parro V."/>
            <person name="Pohl T.M."/>
            <person name="Portetelle D."/>
            <person name="Porwollik S."/>
            <person name="Prescott A.M."/>
            <person name="Presecan E."/>
            <person name="Pujic P."/>
            <person name="Purnelle B."/>
            <person name="Rapoport G."/>
            <person name="Rey M."/>
            <person name="Reynolds S."/>
            <person name="Rieger M."/>
            <person name="Rivolta C."/>
            <person name="Rocha E."/>
            <person name="Roche B."/>
            <person name="Rose M."/>
            <person name="Sadaie Y."/>
            <person name="Sato T."/>
            <person name="Scanlan E."/>
            <person name="Schleich S."/>
            <person name="Schroeter R."/>
            <person name="Scoffone F."/>
            <person name="Sekiguchi J."/>
            <person name="Sekowska A."/>
            <person name="Seror S.J."/>
            <person name="Serror P."/>
            <person name="Shin B.-S."/>
            <person name="Soldo B."/>
            <person name="Sorokin A."/>
            <person name="Tacconi E."/>
            <person name="Takagi T."/>
            <person name="Takahashi H."/>
            <person name="Takemaru K."/>
            <person name="Takeuchi M."/>
            <person name="Tamakoshi A."/>
            <person name="Tanaka T."/>
            <person name="Terpstra P."/>
            <person name="Tognoni A."/>
            <person name="Tosato V."/>
            <person name="Uchiyama S."/>
            <person name="Vandenbol M."/>
            <person name="Vannier F."/>
            <person name="Vassarotti A."/>
            <person name="Viari A."/>
            <person name="Wambutt R."/>
            <person name="Wedler E."/>
            <person name="Wedler H."/>
            <person name="Weitzenegger T."/>
            <person name="Winters P."/>
            <person name="Wipat A."/>
            <person name="Yamamoto H."/>
            <person name="Yamane K."/>
            <person name="Yasumoto K."/>
            <person name="Yata K."/>
            <person name="Yoshida K."/>
            <person name="Yoshikawa H.-F."/>
            <person name="Zumstein E."/>
            <person name="Yoshikawa H."/>
            <person name="Danchin A."/>
        </authorList>
    </citation>
    <scope>NUCLEOTIDE SEQUENCE [LARGE SCALE GENOMIC DNA]</scope>
    <source>
        <strain>168</strain>
    </source>
</reference>
<sequence length="343" mass="39231">MFNNQMLGVIDETTYKHSLQDLTAQRSLGAIPFAGRYRLIDFMLSNMVNADIRSVAIFPKYRYRSLMDHLGAGKEWDLHRKKDGLFFFPSPHLHHEYDEFGSFRQFSDHLDYFHRSTQQYAVISNSHTVCNIQFQYVLKRHQEVGCDVTEVFQDGQSLQIYIMSTTLLKDLIYGHSEKGYKTIQEAVEKESSALTICPYEYSGYAAVIDSVEKYYTHSMELIQPRFWQQVFLPQQPIYTKVKDEPPTKYGKHSTVKNSLVANGCVLEGEVENCILFRAVHVGKGTKLKNCIIMQKTQIGEDCLLEQVISDKDVKIGKATEAAGTAEQPLVLRKGLVQGELMNS</sequence>